<name>MCM2_XENLA</name>
<reference key="1">
    <citation type="journal article" date="1996" name="Gene">
        <title>Identification of two Xenopus laevis genes, xMCM2 and xCDC46, with sequence homology to MCM genes involved in DNA replication.</title>
        <authorList>
            <person name="Miyake S."/>
            <person name="Saito I."/>
            <person name="Kobayashi H."/>
            <person name="Yamashita S."/>
        </authorList>
    </citation>
    <scope>NUCLEOTIDE SEQUENCE [MRNA]</scope>
    <scope>IDENTIFICATION IN A COMPLEX WITH MCM5</scope>
    <source>
        <tissue>Oocyte</tissue>
    </source>
</reference>
<reference key="2">
    <citation type="journal article" date="1997" name="EMBO J.">
        <title>Licensing of DNA replication by a multi-protein complex of MCM/P1 proteins in Xenopus eggs.</title>
        <authorList>
            <person name="Kubota Y."/>
            <person name="Mimura S."/>
            <person name="Nishimoto S."/>
            <person name="Masuda T."/>
            <person name="Nojima H."/>
            <person name="Takisawa H."/>
        </authorList>
    </citation>
    <scope>NUCLEOTIDE SEQUENCE [MRNA]</scope>
    <scope>FUNCTION</scope>
    <scope>IDENTIFICATION IN A COMPLEX WITH MMCM3; MCM4; MCM5; MMCM6 AND MCM7</scope>
    <scope>SUBCELLULAR LOCATION</scope>
    <source>
        <tissue>Oocyte</tissue>
    </source>
</reference>
<reference key="3">
    <citation type="submission" date="2003-01" db="EMBL/GenBank/DDBJ databases">
        <authorList>
            <consortium name="NIH - Xenopus Gene Collection (XGC) project"/>
        </authorList>
    </citation>
    <scope>NUCLEOTIDE SEQUENCE [LARGE SCALE MRNA]</scope>
    <source>
        <tissue>Embryo</tissue>
    </source>
</reference>
<reference key="4">
    <citation type="journal article" date="1997" name="EMBO J.">
        <title>The RLF-M component of the replication licensing system forms complexes containing all six MCM/P1 polypeptides.</title>
        <authorList>
            <person name="Thommes P."/>
            <person name="Kubota Y."/>
            <person name="Takisawa H."/>
            <person name="Blow J.J."/>
        </authorList>
    </citation>
    <scope>FUNCTION</scope>
    <scope>IDENTIFICATION IN RLF-M COMPLEX</scope>
    <scope>SUBCELLULAR LOCATION</scope>
</reference>
<reference key="5">
    <citation type="journal article" date="1998" name="Exp. Cell Res.">
        <title>Evidence for different MCM subcomplexes with differential binding to chromatin in Xenopus.</title>
        <authorList>
            <person name="Coue M."/>
            <person name="Amariglio F."/>
            <person name="Maiorano D."/>
            <person name="Bocquet S."/>
            <person name="Mechali M."/>
        </authorList>
    </citation>
    <scope>IDENTIFICATION IN MCM COMPLEXES</scope>
</reference>
<reference key="6">
    <citation type="journal article" date="2000" name="Mol. Cell. Biol.">
        <title>Distinct phosphoisoforms of the Xenopus Mcm4 protein regulate the function of the Mcm complex.</title>
        <authorList>
            <person name="Pereverzeva I."/>
            <person name="Whitmire E."/>
            <person name="Khan B."/>
            <person name="Coue M."/>
        </authorList>
    </citation>
    <scope>PHOSPHORYLATION</scope>
</reference>
<reference key="7">
    <citation type="journal article" date="2005" name="EMBO J.">
        <title>The ATPase activity of MCM2-7 is dispensable for pre-RC assembly but is required for DNA unwinding.</title>
        <authorList>
            <person name="Ying C.Y."/>
            <person name="Gautier J."/>
        </authorList>
    </citation>
    <scope>FUNCTION OF THE MCM2-7 COMPLEX</scope>
    <scope>IDENTIFICATION IN A COMPLEX WITH MMCM3; MCM4; MCM5; MMCM6 AND MCM7</scope>
</reference>
<reference key="8">
    <citation type="journal article" date="2005" name="Genes Dev.">
        <title>Cdc7-Drf1 is a developmentally regulated protein kinase required for the initiation of vertebrate DNA replication.</title>
        <authorList>
            <person name="Takahashi T.S."/>
            <person name="Walter J.C."/>
        </authorList>
    </citation>
    <scope>PHOSPHORYLATION</scope>
</reference>
<reference key="9">
    <citation type="journal article" date="2019" name="Life. Sci Alliance">
        <title>Mitotic replisome disassembly depends on TRAIP ubiquitin ligase activity.</title>
        <authorList>
            <person name="Priego Moreno S."/>
            <person name="Jones R.M."/>
            <person name="Poovathumkadavil D."/>
            <person name="Scaramuzza S."/>
            <person name="Gambus A."/>
        </authorList>
    </citation>
    <scope>IDENTIFICATION IN THE CMG HELICASE COMPLEX</scope>
</reference>
<reference key="10">
    <citation type="journal article" date="2019" name="Nature">
        <title>TRAIP is a master regulator of DNA interstrand crosslink repair.</title>
        <authorList>
            <person name="Wu R.A."/>
            <person name="Semlow D.R."/>
            <person name="Kamimae-Lanning A.N."/>
            <person name="Kochenova O.V."/>
            <person name="Chistol G."/>
            <person name="Hodskinson M.R."/>
            <person name="Amunugama R."/>
            <person name="Sparks J.L."/>
            <person name="Wang M."/>
            <person name="Deng L."/>
            <person name="Mimoso C.A."/>
            <person name="Low E."/>
            <person name="Patel K.J."/>
            <person name="Walter J.C."/>
        </authorList>
    </citation>
    <scope>IDENTIFICATION IN THE CMG HELICASE COMPLEX</scope>
</reference>
<dbReference type="EC" id="3.6.4.12" evidence="1"/>
<dbReference type="EMBL" id="D63919">
    <property type="protein sequence ID" value="BAA09948.1"/>
    <property type="molecule type" value="mRNA"/>
</dbReference>
<dbReference type="EMBL" id="U44047">
    <property type="protein sequence ID" value="AAC60223.1"/>
    <property type="molecule type" value="mRNA"/>
</dbReference>
<dbReference type="EMBL" id="BC046274">
    <property type="protein sequence ID" value="AAH46274.1"/>
    <property type="molecule type" value="mRNA"/>
</dbReference>
<dbReference type="PIR" id="JC5085">
    <property type="entry name" value="JC5085"/>
</dbReference>
<dbReference type="RefSeq" id="NP_001080759.1">
    <property type="nucleotide sequence ID" value="NM_001087290.2"/>
</dbReference>
<dbReference type="PDB" id="8Q6O">
    <property type="method" value="EM"/>
    <property type="resolution" value="3.14 A"/>
    <property type="chains" value="2/A=1-886"/>
</dbReference>
<dbReference type="PDB" id="8Q6P">
    <property type="method" value="EM"/>
    <property type="resolution" value="3.53 A"/>
    <property type="chains" value="2=1-886"/>
</dbReference>
<dbReference type="PDBsum" id="8Q6O"/>
<dbReference type="PDBsum" id="8Q6P"/>
<dbReference type="EMDB" id="EMD-18191"/>
<dbReference type="EMDB" id="EMD-18192"/>
<dbReference type="EMDB" id="EMD-18195"/>
<dbReference type="SMR" id="P55861"/>
<dbReference type="BioGRID" id="98693">
    <property type="interactions" value="13"/>
</dbReference>
<dbReference type="ComplexPortal" id="CPX-2943">
    <property type="entry name" value="MCM complex"/>
</dbReference>
<dbReference type="IntAct" id="P55861">
    <property type="interactions" value="7"/>
</dbReference>
<dbReference type="MINT" id="P55861"/>
<dbReference type="iPTMnet" id="P55861"/>
<dbReference type="DNASU" id="380451"/>
<dbReference type="GeneID" id="380451"/>
<dbReference type="KEGG" id="xla:380451"/>
<dbReference type="AGR" id="Xenbase:XB-GENE-999979"/>
<dbReference type="CTD" id="380451"/>
<dbReference type="Xenbase" id="XB-GENE-999979">
    <property type="gene designation" value="mcm2.L"/>
</dbReference>
<dbReference type="OMA" id="KFARYTH"/>
<dbReference type="OrthoDB" id="844at2759"/>
<dbReference type="Proteomes" id="UP000186698">
    <property type="component" value="Chromosome 4L"/>
</dbReference>
<dbReference type="Bgee" id="380451">
    <property type="expression patterns" value="Expressed in oocyte and 18 other cell types or tissues"/>
</dbReference>
<dbReference type="GO" id="GO:0000785">
    <property type="term" value="C:chromatin"/>
    <property type="evidence" value="ECO:0000314"/>
    <property type="project" value="UniProtKB"/>
</dbReference>
<dbReference type="GO" id="GO:0071162">
    <property type="term" value="C:CMG complex"/>
    <property type="evidence" value="ECO:0000314"/>
    <property type="project" value="UniProtKB"/>
</dbReference>
<dbReference type="GO" id="GO:0042555">
    <property type="term" value="C:MCM complex"/>
    <property type="evidence" value="ECO:0000314"/>
    <property type="project" value="UniProtKB"/>
</dbReference>
<dbReference type="GO" id="GO:0005634">
    <property type="term" value="C:nucleus"/>
    <property type="evidence" value="ECO:0000318"/>
    <property type="project" value="GO_Central"/>
</dbReference>
<dbReference type="GO" id="GO:0043138">
    <property type="term" value="F:3'-5' DNA helicase activity"/>
    <property type="evidence" value="ECO:0007669"/>
    <property type="project" value="TreeGrafter"/>
</dbReference>
<dbReference type="GO" id="GO:0005524">
    <property type="term" value="F:ATP binding"/>
    <property type="evidence" value="ECO:0007669"/>
    <property type="project" value="UniProtKB-KW"/>
</dbReference>
<dbReference type="GO" id="GO:0016887">
    <property type="term" value="F:ATP hydrolysis activity"/>
    <property type="evidence" value="ECO:0007669"/>
    <property type="project" value="RHEA"/>
</dbReference>
<dbReference type="GO" id="GO:0003697">
    <property type="term" value="F:single-stranded DNA binding"/>
    <property type="evidence" value="ECO:0000318"/>
    <property type="project" value="GO_Central"/>
</dbReference>
<dbReference type="GO" id="GO:0017116">
    <property type="term" value="F:single-stranded DNA helicase activity"/>
    <property type="evidence" value="ECO:0007669"/>
    <property type="project" value="TreeGrafter"/>
</dbReference>
<dbReference type="GO" id="GO:0008270">
    <property type="term" value="F:zinc ion binding"/>
    <property type="evidence" value="ECO:0007669"/>
    <property type="project" value="UniProtKB-KW"/>
</dbReference>
<dbReference type="GO" id="GO:0044786">
    <property type="term" value="P:cell cycle DNA replication"/>
    <property type="evidence" value="ECO:0000314"/>
    <property type="project" value="UniProtKB"/>
</dbReference>
<dbReference type="GO" id="GO:0006260">
    <property type="term" value="P:DNA replication"/>
    <property type="evidence" value="ECO:0000318"/>
    <property type="project" value="GO_Central"/>
</dbReference>
<dbReference type="GO" id="GO:0000727">
    <property type="term" value="P:double-strand break repair via break-induced replication"/>
    <property type="evidence" value="ECO:0000318"/>
    <property type="project" value="GO_Central"/>
</dbReference>
<dbReference type="GO" id="GO:1902975">
    <property type="term" value="P:mitotic DNA replication initiation"/>
    <property type="evidence" value="ECO:0000318"/>
    <property type="project" value="GO_Central"/>
</dbReference>
<dbReference type="GO" id="GO:0006279">
    <property type="term" value="P:premeiotic DNA replication"/>
    <property type="evidence" value="ECO:0000314"/>
    <property type="project" value="ComplexPortal"/>
</dbReference>
<dbReference type="GO" id="GO:0030174">
    <property type="term" value="P:regulation of DNA-templated DNA replication initiation"/>
    <property type="evidence" value="ECO:0000314"/>
    <property type="project" value="UniProtKB"/>
</dbReference>
<dbReference type="CDD" id="cd17753">
    <property type="entry name" value="MCM2"/>
    <property type="match status" value="1"/>
</dbReference>
<dbReference type="FunFam" id="2.20.28.10:FF:000002">
    <property type="entry name" value="DNA helicase"/>
    <property type="match status" value="1"/>
</dbReference>
<dbReference type="FunFam" id="3.30.1640.10:FF:000005">
    <property type="entry name" value="DNA helicase"/>
    <property type="match status" value="1"/>
</dbReference>
<dbReference type="FunFam" id="3.40.50.300:FF:000138">
    <property type="entry name" value="DNA helicase"/>
    <property type="match status" value="1"/>
</dbReference>
<dbReference type="Gene3D" id="2.20.28.10">
    <property type="match status" value="1"/>
</dbReference>
<dbReference type="Gene3D" id="3.30.1640.10">
    <property type="entry name" value="mini-chromosome maintenance (MCM) complex, chain A, domain 1"/>
    <property type="match status" value="1"/>
</dbReference>
<dbReference type="Gene3D" id="2.40.50.140">
    <property type="entry name" value="Nucleic acid-binding proteins"/>
    <property type="match status" value="1"/>
</dbReference>
<dbReference type="Gene3D" id="3.40.50.300">
    <property type="entry name" value="P-loop containing nucleotide triphosphate hydrolases"/>
    <property type="match status" value="1"/>
</dbReference>
<dbReference type="InterPro" id="IPR031327">
    <property type="entry name" value="MCM"/>
</dbReference>
<dbReference type="InterPro" id="IPR008045">
    <property type="entry name" value="MCM2"/>
</dbReference>
<dbReference type="InterPro" id="IPR018525">
    <property type="entry name" value="MCM_CS"/>
</dbReference>
<dbReference type="InterPro" id="IPR001208">
    <property type="entry name" value="MCM_dom"/>
</dbReference>
<dbReference type="InterPro" id="IPR041562">
    <property type="entry name" value="MCM_lid"/>
</dbReference>
<dbReference type="InterPro" id="IPR027925">
    <property type="entry name" value="MCM_N"/>
</dbReference>
<dbReference type="InterPro" id="IPR033762">
    <property type="entry name" value="MCM_OB"/>
</dbReference>
<dbReference type="InterPro" id="IPR012340">
    <property type="entry name" value="NA-bd_OB-fold"/>
</dbReference>
<dbReference type="InterPro" id="IPR027417">
    <property type="entry name" value="P-loop_NTPase"/>
</dbReference>
<dbReference type="PANTHER" id="PTHR11630">
    <property type="entry name" value="DNA REPLICATION LICENSING FACTOR MCM FAMILY MEMBER"/>
    <property type="match status" value="1"/>
</dbReference>
<dbReference type="PANTHER" id="PTHR11630:SF44">
    <property type="entry name" value="DNA REPLICATION LICENSING FACTOR MCM2"/>
    <property type="match status" value="1"/>
</dbReference>
<dbReference type="Pfam" id="PF00493">
    <property type="entry name" value="MCM"/>
    <property type="match status" value="1"/>
</dbReference>
<dbReference type="Pfam" id="PF12619">
    <property type="entry name" value="MCM2_N"/>
    <property type="match status" value="1"/>
</dbReference>
<dbReference type="Pfam" id="PF17855">
    <property type="entry name" value="MCM_lid"/>
    <property type="match status" value="1"/>
</dbReference>
<dbReference type="Pfam" id="PF14551">
    <property type="entry name" value="MCM_N"/>
    <property type="match status" value="1"/>
</dbReference>
<dbReference type="Pfam" id="PF17207">
    <property type="entry name" value="MCM_OB"/>
    <property type="match status" value="1"/>
</dbReference>
<dbReference type="Pfam" id="PF23669">
    <property type="entry name" value="WH_MCM2"/>
    <property type="match status" value="1"/>
</dbReference>
<dbReference type="PRINTS" id="PR01657">
    <property type="entry name" value="MCMFAMILY"/>
</dbReference>
<dbReference type="PRINTS" id="PR01658">
    <property type="entry name" value="MCMPROTEIN2"/>
</dbReference>
<dbReference type="SMART" id="SM00350">
    <property type="entry name" value="MCM"/>
    <property type="match status" value="1"/>
</dbReference>
<dbReference type="SUPFAM" id="SSF50249">
    <property type="entry name" value="Nucleic acid-binding proteins"/>
    <property type="match status" value="1"/>
</dbReference>
<dbReference type="SUPFAM" id="SSF52540">
    <property type="entry name" value="P-loop containing nucleoside triphosphate hydrolases"/>
    <property type="match status" value="1"/>
</dbReference>
<dbReference type="PROSITE" id="PS00847">
    <property type="entry name" value="MCM_1"/>
    <property type="match status" value="1"/>
</dbReference>
<dbReference type="PROSITE" id="PS50051">
    <property type="entry name" value="MCM_2"/>
    <property type="match status" value="1"/>
</dbReference>
<keyword id="KW-0002">3D-structure</keyword>
<keyword id="KW-0067">ATP-binding</keyword>
<keyword id="KW-0131">Cell cycle</keyword>
<keyword id="KW-0158">Chromosome</keyword>
<keyword id="KW-0235">DNA replication</keyword>
<keyword id="KW-0238">DNA-binding</keyword>
<keyword id="KW-0347">Helicase</keyword>
<keyword id="KW-0378">Hydrolase</keyword>
<keyword id="KW-0479">Metal-binding</keyword>
<keyword id="KW-0547">Nucleotide-binding</keyword>
<keyword id="KW-0539">Nucleus</keyword>
<keyword id="KW-1185">Reference proteome</keyword>
<keyword id="KW-0862">Zinc</keyword>
<keyword id="KW-0863">Zinc-finger</keyword>
<accession>P55861</accession>
<accession>O42588</accession>
<accession>Q7ZX05</accession>
<feature type="chain" id="PRO_0000194089" description="DNA replication licensing factor mcm2">
    <location>
        <begin position="1"/>
        <end position="886"/>
    </location>
</feature>
<feature type="domain" description="MCM">
    <location>
        <begin position="458"/>
        <end position="665"/>
    </location>
</feature>
<feature type="zinc finger region" description="C4-type" evidence="2">
    <location>
        <begin position="314"/>
        <end position="340"/>
    </location>
</feature>
<feature type="region of interest" description="Disordered" evidence="3">
    <location>
        <begin position="1"/>
        <end position="65"/>
    </location>
</feature>
<feature type="region of interest" description="Disordered" evidence="3">
    <location>
        <begin position="77"/>
        <end position="104"/>
    </location>
</feature>
<feature type="region of interest" description="Disordered" evidence="3">
    <location>
        <begin position="120"/>
        <end position="151"/>
    </location>
</feature>
<feature type="short sequence motif" description="Arginine finger">
    <location>
        <begin position="640"/>
        <end position="643"/>
    </location>
</feature>
<feature type="compositionally biased region" description="Polar residues" evidence="3">
    <location>
        <begin position="1"/>
        <end position="12"/>
    </location>
</feature>
<feature type="compositionally biased region" description="Acidic residues" evidence="3">
    <location>
        <begin position="47"/>
        <end position="58"/>
    </location>
</feature>
<feature type="compositionally biased region" description="Acidic residues" evidence="3">
    <location>
        <begin position="78"/>
        <end position="88"/>
    </location>
</feature>
<feature type="compositionally biased region" description="Basic and acidic residues" evidence="3">
    <location>
        <begin position="95"/>
        <end position="104"/>
    </location>
</feature>
<feature type="binding site" evidence="1">
    <location>
        <position position="515"/>
    </location>
    <ligand>
        <name>ADP</name>
        <dbReference type="ChEBI" id="CHEBI:456216"/>
        <note>ligand shared with MCM6</note>
    </ligand>
</feature>
<feature type="binding site" evidence="1">
    <location>
        <position position="516"/>
    </location>
    <ligand>
        <name>ADP</name>
        <dbReference type="ChEBI" id="CHEBI:456216"/>
        <note>ligand shared with MCM6</note>
    </ligand>
</feature>
<feature type="sequence conflict" description="In Ref. 2; AAC60223." evidence="13" ref="2">
    <original>E</original>
    <variation>K</variation>
    <location>
        <position position="169"/>
    </location>
</feature>
<feature type="sequence conflict" description="In Ref. 1; BAA09948." evidence="13" ref="1">
    <original>G</original>
    <variation>R</variation>
    <location>
        <position position="439"/>
    </location>
</feature>
<feature type="sequence conflict" description="In Ref. 1; BAA09948." evidence="13" ref="1">
    <original>L</original>
    <variation>F</variation>
    <location>
        <position position="563"/>
    </location>
</feature>
<feature type="sequence conflict" description="In Ref. 1; BAA09948." evidence="13" ref="1">
    <original>M</original>
    <variation>I</variation>
    <location>
        <position position="728"/>
    </location>
</feature>
<feature type="helix" evidence="14">
    <location>
        <begin position="167"/>
        <end position="171"/>
    </location>
</feature>
<feature type="helix" evidence="14">
    <location>
        <begin position="174"/>
        <end position="189"/>
    </location>
</feature>
<feature type="helix" evidence="14">
    <location>
        <begin position="199"/>
        <end position="209"/>
    </location>
</feature>
<feature type="strand" evidence="14">
    <location>
        <begin position="214"/>
        <end position="218"/>
    </location>
</feature>
<feature type="helix" evidence="14">
    <location>
        <begin position="219"/>
        <end position="225"/>
    </location>
</feature>
<feature type="helix" evidence="14">
    <location>
        <begin position="227"/>
        <end position="232"/>
    </location>
</feature>
<feature type="turn" evidence="14">
    <location>
        <begin position="233"/>
        <end position="235"/>
    </location>
</feature>
<feature type="helix" evidence="14">
    <location>
        <begin position="237"/>
        <end position="255"/>
    </location>
</feature>
<feature type="turn" evidence="14">
    <location>
        <begin position="257"/>
        <end position="262"/>
    </location>
</feature>
<feature type="strand" evidence="14">
    <location>
        <begin position="267"/>
        <end position="271"/>
    </location>
</feature>
<feature type="helix" evidence="14">
    <location>
        <begin position="279"/>
        <end position="281"/>
    </location>
</feature>
<feature type="helix" evidence="14">
    <location>
        <begin position="284"/>
        <end position="286"/>
    </location>
</feature>
<feature type="strand" evidence="14">
    <location>
        <begin position="289"/>
        <end position="300"/>
    </location>
</feature>
<feature type="strand" evidence="14">
    <location>
        <begin position="304"/>
        <end position="313"/>
    </location>
</feature>
<feature type="turn" evidence="14">
    <location>
        <begin position="315"/>
        <end position="317"/>
    </location>
</feature>
<feature type="strand" evidence="14">
    <location>
        <begin position="320"/>
        <end position="325"/>
    </location>
</feature>
<feature type="strand" evidence="14">
    <location>
        <begin position="338"/>
        <end position="340"/>
    </location>
</feature>
<feature type="turn" evidence="14">
    <location>
        <begin position="350"/>
        <end position="352"/>
    </location>
</feature>
<feature type="strand" evidence="14">
    <location>
        <begin position="354"/>
        <end position="364"/>
    </location>
</feature>
<feature type="turn" evidence="14">
    <location>
        <begin position="367"/>
        <end position="369"/>
    </location>
</feature>
<feature type="strand" evidence="14">
    <location>
        <begin position="372"/>
        <end position="374"/>
    </location>
</feature>
<feature type="strand" evidence="14">
    <location>
        <begin position="378"/>
        <end position="384"/>
    </location>
</feature>
<feature type="helix" evidence="14">
    <location>
        <begin position="385"/>
        <end position="387"/>
    </location>
</feature>
<feature type="strand" evidence="14">
    <location>
        <begin position="396"/>
        <end position="407"/>
    </location>
</feature>
<feature type="helix" evidence="14">
    <location>
        <begin position="409"/>
        <end position="415"/>
    </location>
</feature>
<feature type="strand" evidence="14">
    <location>
        <begin position="419"/>
        <end position="431"/>
    </location>
</feature>
<organism>
    <name type="scientific">Xenopus laevis</name>
    <name type="common">African clawed frog</name>
    <dbReference type="NCBI Taxonomy" id="8355"/>
    <lineage>
        <taxon>Eukaryota</taxon>
        <taxon>Metazoa</taxon>
        <taxon>Chordata</taxon>
        <taxon>Craniata</taxon>
        <taxon>Vertebrata</taxon>
        <taxon>Euteleostomi</taxon>
        <taxon>Amphibia</taxon>
        <taxon>Batrachia</taxon>
        <taxon>Anura</taxon>
        <taxon>Pipoidea</taxon>
        <taxon>Pipidae</taxon>
        <taxon>Xenopodinae</taxon>
        <taxon>Xenopus</taxon>
        <taxon>Xenopus</taxon>
    </lineage>
</organism>
<proteinExistence type="evidence at protein level"/>
<comment type="function">
    <text evidence="6 10 11">Acts as a component of the MCM2-7 complex (MCM complex) which is the replicative helicase essential for 'once per cell cycle' DNA replication initiation and elongation in eukaryotic cells. Core component of CDC45-MCM-GINS (CMG) helicase, the molecular machine that unwinds template DNA during replication, and around which the replisome is built. The active ATPase sites in the MCM2-7 ring are formed through the interaction surfaces of two neighboring subunits such that a critical structure of a conserved arginine finger motif is provided in trans relative to the ATP-binding site of the Walker A box of the adjacent subunit. The six ATPase active sites, however, are likely to contribute differentially to the complex helicase activity. Required for the entry in S phase and for cell division.</text>
</comment>
<comment type="catalytic activity">
    <reaction evidence="1">
        <text>ATP + H2O = ADP + phosphate + H(+)</text>
        <dbReference type="Rhea" id="RHEA:13065"/>
        <dbReference type="ChEBI" id="CHEBI:15377"/>
        <dbReference type="ChEBI" id="CHEBI:15378"/>
        <dbReference type="ChEBI" id="CHEBI:30616"/>
        <dbReference type="ChEBI" id="CHEBI:43474"/>
        <dbReference type="ChEBI" id="CHEBI:456216"/>
        <dbReference type="EC" id="3.6.4.12"/>
    </reaction>
    <physiologicalReaction direction="left-to-right" evidence="1">
        <dbReference type="Rhea" id="RHEA:13066"/>
    </physiologicalReaction>
</comment>
<comment type="subunit">
    <text evidence="1 6 7 8 9 10 11 12">Component of the mcm2-7 complex (RLF-M) (PubMed:16369567, PubMed:8917078, PubMed:9214646, PubMed:9214647, PubMed:9851868). The complex forms a toroidal hexameric ring with the proposed subunit order mcm2-mcm6-mcm4-mcm7-mcm3-mcm5 (PubMed:16369567, PubMed:8917078, PubMed:9214646, PubMed:9214647, PubMed:9851868). Component of the replisome complex (By similarity). Component of the CMG helicase complex, composed of the mcm2-7 complex, the GINS complex and cdc45 (PubMed:30842657, PubMed:30979826).</text>
</comment>
<comment type="interaction">
    <interactant intactId="EBI-876864">
        <id>P55861</id>
    </interactant>
    <interactant intactId="EBI-491720">
        <id>P49739</id>
        <label>mmcm3</label>
    </interactant>
    <organismsDiffer>false</organismsDiffer>
    <experiments>9</experiments>
</comment>
<comment type="subcellular location">
    <subcellularLocation>
        <location evidence="10 11">Nucleus</location>
    </subcellularLocation>
    <subcellularLocation>
        <location evidence="10 11">Chromosome</location>
    </subcellularLocation>
    <text evidence="10 11">Associated with chromatin before the formation of nuclei and detaches from it as DNA replication progresses.</text>
</comment>
<comment type="PTM">
    <text evidence="4 5">May be in a phosphorylated state in the mitotic mcm complex. Phosphorylated in the interphase mcm complex. Phosphorylated by the cdc7-dbf4 and cdc7-dbf4b complexes.</text>
</comment>
<comment type="miscellaneous">
    <text evidence="1">Early fractionation of eukaryotic MCM proteins yielded a variety of dimeric, trimeric and tetrameric complexes with unclear biological significance. Specifically a MCM467 subcomplex is shown to have in vitro helicase activity which is inhibited by the MCM2 subunit. The MCM2-7 hexamer is the proposed physiological active complex.</text>
</comment>
<comment type="similarity">
    <text evidence="13">Belongs to the MCM family.</text>
</comment>
<gene>
    <name type="primary">mcm2</name>
</gene>
<protein>
    <recommendedName>
        <fullName>DNA replication licensing factor mcm2</fullName>
        <ecNumber evidence="1">3.6.4.12</ecNumber>
    </recommendedName>
    <alternativeName>
        <fullName>BM28-homolog</fullName>
    </alternativeName>
    <alternativeName>
        <fullName>Minichromosome maintenance protein 2</fullName>
        <shortName>xMCM2</shortName>
    </alternativeName>
    <alternativeName>
        <fullName>p112</fullName>
    </alternativeName>
</protein>
<sequence>MADSSESFNIATSPRAGSRRDALTSSPGRDLPPFEDESEGMFGDGVVPEEEEDGEELIGDAMERDYRPISELDRYEVEGLDDEEDVEDLTASQREAAEQSMRMRDREMGRELGRMRRGLLYDSDEEEEDRPARKRRMAERAAEGAPEEDEEMIESIENLEDMKGHTVREWVSMAATRLEIYHRFKNFLRTHVDEHGHNVFKEKISDMCKENKESLPVNYEDLAAREHVLAYFLPEAPAEMLKIFDEAAKEVVLVMYPKYDRIAREIHVRISHLPLVEELRSLRQLHLNQLIRTSGVVTCCTGVLPQLSMVKYNCNKCNFILGPFFQSQNQEVRPGSCPECQSFGPFEINMEETVYQNYQRITIQESPGKVAAGRLPRSKDAILLADLVDSCKPGDEIELTGIYHNNYDGSLNTANGFPVFATVILANHITKKDDKVAVGELTDEDVKAIVALSKDERIGERIFASIAPSIYGHEDIKRGLALALFGGEAKNPGGKHKVRGDINVLLCGDPGTAKSQFLKYVEKVASRAVFTTGQGASAVGLTAYVQRHPVTKEWTLEAGALVLADRGVCLIDEFDKMNDQDRTSIHEAMEQQSISISKAGIVTSLQARCTVIAASNPIGGRYDPSLTFSENVDLTEPIVSRFDILCVVRDTVDPVQDEMLARFVVSSHIKHHPSSKDIANGDAAEFALPNTFGVEALPQEVLKKYIMYAKEKIRPKLNQMDQDKVAKMYSDLRKESMATGSIPITVRHIESMIRMAEAHARMHLRDYVVEDDVNMAIRVMLESFIDTQKFSVMRSMRKTFARYLAFRRDNNELLLFVLKQLIAEQVTYQRNRYGAQQDTIEVPEKDLVDKARQINIHNLSAFYDSDLFKMNKFTHDVKKKLIIQQF</sequence>
<evidence type="ECO:0000250" key="1">
    <source>
        <dbReference type="UniProtKB" id="P49736"/>
    </source>
</evidence>
<evidence type="ECO:0000255" key="2"/>
<evidence type="ECO:0000256" key="3">
    <source>
        <dbReference type="SAM" id="MobiDB-lite"/>
    </source>
</evidence>
<evidence type="ECO:0000269" key="4">
    <source>
    </source>
</evidence>
<evidence type="ECO:0000269" key="5">
    <source>
    </source>
</evidence>
<evidence type="ECO:0000269" key="6">
    <source>
    </source>
</evidence>
<evidence type="ECO:0000269" key="7">
    <source>
    </source>
</evidence>
<evidence type="ECO:0000269" key="8">
    <source>
    </source>
</evidence>
<evidence type="ECO:0000269" key="9">
    <source>
    </source>
</evidence>
<evidence type="ECO:0000269" key="10">
    <source>
    </source>
</evidence>
<evidence type="ECO:0000269" key="11">
    <source>
    </source>
</evidence>
<evidence type="ECO:0000269" key="12">
    <source>
    </source>
</evidence>
<evidence type="ECO:0000305" key="13"/>
<evidence type="ECO:0007829" key="14">
    <source>
        <dbReference type="PDB" id="8Q6O"/>
    </source>
</evidence>